<sequence length="318" mass="34277">MNLVRTAMLLAFMTALFMFVGFLIGGRAGMMIAFLIAAGMNFFSYWNSDRMVLSAYRAQQVDERNAPEFFAIVRDLARNAGLPMPKVYLYDSPQPNAFATGRNPENAAVAASTGLLQALSPEEVAGVMAHELAHIQNRDTLTMTITATLAGAISMLGNFAFFFGGNRDNNNNPLGFVGVLVAMIVAPLAAMLVQMAISRTREYSADRRGAEICGNPLWLASALGKIARGAAHVPNEDAERNPATAHMFIINPLSGERMDNLFSTHPDTENRIAALQEMAQSGMNVSTGPVRAVNPTRKSRSVPNTGRGGSQPPRGPWS</sequence>
<protein>
    <recommendedName>
        <fullName evidence="1">Protease HtpX homolog</fullName>
        <ecNumber evidence="1">3.4.24.-</ecNumber>
    </recommendedName>
</protein>
<evidence type="ECO:0000255" key="1">
    <source>
        <dbReference type="HAMAP-Rule" id="MF_00188"/>
    </source>
</evidence>
<evidence type="ECO:0000256" key="2">
    <source>
        <dbReference type="SAM" id="MobiDB-lite"/>
    </source>
</evidence>
<dbReference type="EC" id="3.4.24.-" evidence="1"/>
<dbReference type="EMBL" id="CP001074">
    <property type="protein sequence ID" value="ACE93329.1"/>
    <property type="molecule type" value="Genomic_DNA"/>
</dbReference>
<dbReference type="KEGG" id="rec:RHECIAT_CH0004402"/>
<dbReference type="eggNOG" id="COG0501">
    <property type="taxonomic scope" value="Bacteria"/>
</dbReference>
<dbReference type="HOGENOM" id="CLU_042266_3_0_5"/>
<dbReference type="Proteomes" id="UP000008817">
    <property type="component" value="Chromosome"/>
</dbReference>
<dbReference type="GO" id="GO:0005886">
    <property type="term" value="C:plasma membrane"/>
    <property type="evidence" value="ECO:0007669"/>
    <property type="project" value="UniProtKB-SubCell"/>
</dbReference>
<dbReference type="GO" id="GO:0004222">
    <property type="term" value="F:metalloendopeptidase activity"/>
    <property type="evidence" value="ECO:0007669"/>
    <property type="project" value="UniProtKB-UniRule"/>
</dbReference>
<dbReference type="GO" id="GO:0008270">
    <property type="term" value="F:zinc ion binding"/>
    <property type="evidence" value="ECO:0007669"/>
    <property type="project" value="UniProtKB-UniRule"/>
</dbReference>
<dbReference type="GO" id="GO:0006508">
    <property type="term" value="P:proteolysis"/>
    <property type="evidence" value="ECO:0007669"/>
    <property type="project" value="UniProtKB-KW"/>
</dbReference>
<dbReference type="CDD" id="cd07336">
    <property type="entry name" value="M48B_HtpX_like"/>
    <property type="match status" value="1"/>
</dbReference>
<dbReference type="Gene3D" id="3.30.2010.10">
    <property type="entry name" value="Metalloproteases ('zincins'), catalytic domain"/>
    <property type="match status" value="1"/>
</dbReference>
<dbReference type="HAMAP" id="MF_00188">
    <property type="entry name" value="Pept_M48_protease_HtpX"/>
    <property type="match status" value="1"/>
</dbReference>
<dbReference type="InterPro" id="IPR050083">
    <property type="entry name" value="HtpX_protease"/>
</dbReference>
<dbReference type="InterPro" id="IPR022919">
    <property type="entry name" value="Pept_M48_protease_HtpX"/>
</dbReference>
<dbReference type="InterPro" id="IPR001915">
    <property type="entry name" value="Peptidase_M48"/>
</dbReference>
<dbReference type="NCBIfam" id="NF002363">
    <property type="entry name" value="PRK01345.1"/>
    <property type="match status" value="1"/>
</dbReference>
<dbReference type="NCBIfam" id="NF002826">
    <property type="entry name" value="PRK03001.1"/>
    <property type="match status" value="1"/>
</dbReference>
<dbReference type="PANTHER" id="PTHR43221">
    <property type="entry name" value="PROTEASE HTPX"/>
    <property type="match status" value="1"/>
</dbReference>
<dbReference type="PANTHER" id="PTHR43221:SF1">
    <property type="entry name" value="PROTEASE HTPX"/>
    <property type="match status" value="1"/>
</dbReference>
<dbReference type="Pfam" id="PF01435">
    <property type="entry name" value="Peptidase_M48"/>
    <property type="match status" value="1"/>
</dbReference>
<dbReference type="PROSITE" id="PS00142">
    <property type="entry name" value="ZINC_PROTEASE"/>
    <property type="match status" value="1"/>
</dbReference>
<accession>B3PS39</accession>
<proteinExistence type="inferred from homology"/>
<comment type="cofactor">
    <cofactor evidence="1">
        <name>Zn(2+)</name>
        <dbReference type="ChEBI" id="CHEBI:29105"/>
    </cofactor>
    <text evidence="1">Binds 1 zinc ion per subunit.</text>
</comment>
<comment type="subcellular location">
    <subcellularLocation>
        <location evidence="1">Cell inner membrane</location>
        <topology evidence="1">Multi-pass membrane protein</topology>
    </subcellularLocation>
</comment>
<comment type="similarity">
    <text evidence="1">Belongs to the peptidase M48B family.</text>
</comment>
<name>HTPX_RHIE6</name>
<feature type="chain" id="PRO_1000098836" description="Protease HtpX homolog">
    <location>
        <begin position="1"/>
        <end position="318"/>
    </location>
</feature>
<feature type="transmembrane region" description="Helical" evidence="1">
    <location>
        <begin position="6"/>
        <end position="26"/>
    </location>
</feature>
<feature type="transmembrane region" description="Helical" evidence="1">
    <location>
        <begin position="28"/>
        <end position="48"/>
    </location>
</feature>
<feature type="transmembrane region" description="Helical" evidence="1">
    <location>
        <begin position="145"/>
        <end position="165"/>
    </location>
</feature>
<feature type="transmembrane region" description="Helical" evidence="1">
    <location>
        <begin position="173"/>
        <end position="193"/>
    </location>
</feature>
<feature type="region of interest" description="Disordered" evidence="2">
    <location>
        <begin position="284"/>
        <end position="318"/>
    </location>
</feature>
<feature type="active site" evidence="1">
    <location>
        <position position="131"/>
    </location>
</feature>
<feature type="binding site" evidence="1">
    <location>
        <position position="130"/>
    </location>
    <ligand>
        <name>Zn(2+)</name>
        <dbReference type="ChEBI" id="CHEBI:29105"/>
        <note>catalytic</note>
    </ligand>
</feature>
<feature type="binding site" evidence="1">
    <location>
        <position position="134"/>
    </location>
    <ligand>
        <name>Zn(2+)</name>
        <dbReference type="ChEBI" id="CHEBI:29105"/>
        <note>catalytic</note>
    </ligand>
</feature>
<feature type="binding site" evidence="1">
    <location>
        <position position="202"/>
    </location>
    <ligand>
        <name>Zn(2+)</name>
        <dbReference type="ChEBI" id="CHEBI:29105"/>
        <note>catalytic</note>
    </ligand>
</feature>
<organism>
    <name type="scientific">Rhizobium etli (strain CIAT 652)</name>
    <dbReference type="NCBI Taxonomy" id="491916"/>
    <lineage>
        <taxon>Bacteria</taxon>
        <taxon>Pseudomonadati</taxon>
        <taxon>Pseudomonadota</taxon>
        <taxon>Alphaproteobacteria</taxon>
        <taxon>Hyphomicrobiales</taxon>
        <taxon>Rhizobiaceae</taxon>
        <taxon>Rhizobium/Agrobacterium group</taxon>
        <taxon>Rhizobium</taxon>
    </lineage>
</organism>
<reference key="1">
    <citation type="journal article" date="2010" name="Appl. Environ. Microbiol.">
        <title>Conserved symbiotic plasmid DNA sequences in the multireplicon pangenomic structure of Rhizobium etli.</title>
        <authorList>
            <person name="Gonzalez V."/>
            <person name="Acosta J.L."/>
            <person name="Santamaria R.I."/>
            <person name="Bustos P."/>
            <person name="Fernandez J.L."/>
            <person name="Hernandez Gonzalez I.L."/>
            <person name="Diaz R."/>
            <person name="Flores M."/>
            <person name="Palacios R."/>
            <person name="Mora J."/>
            <person name="Davila G."/>
        </authorList>
    </citation>
    <scope>NUCLEOTIDE SEQUENCE [LARGE SCALE GENOMIC DNA]</scope>
    <source>
        <strain>CIAT 652</strain>
    </source>
</reference>
<gene>
    <name evidence="1" type="primary">htpX</name>
    <name type="ordered locus">RHECIAT_CH0004402</name>
</gene>
<keyword id="KW-0997">Cell inner membrane</keyword>
<keyword id="KW-1003">Cell membrane</keyword>
<keyword id="KW-0378">Hydrolase</keyword>
<keyword id="KW-0472">Membrane</keyword>
<keyword id="KW-0479">Metal-binding</keyword>
<keyword id="KW-0482">Metalloprotease</keyword>
<keyword id="KW-0645">Protease</keyword>
<keyword id="KW-0812">Transmembrane</keyword>
<keyword id="KW-1133">Transmembrane helix</keyword>
<keyword id="KW-0862">Zinc</keyword>